<protein>
    <recommendedName>
        <fullName evidence="1">Phosphoribosylformylglycinamidine cyclo-ligase</fullName>
        <ecNumber evidence="1">6.3.3.1</ecNumber>
    </recommendedName>
    <alternativeName>
        <fullName evidence="1">AIR synthase</fullName>
    </alternativeName>
    <alternativeName>
        <fullName evidence="1">AIRS</fullName>
    </alternativeName>
    <alternativeName>
        <fullName evidence="1">Phosphoribosyl-aminoimidazole synthetase</fullName>
    </alternativeName>
</protein>
<evidence type="ECO:0000255" key="1">
    <source>
        <dbReference type="HAMAP-Rule" id="MF_00741"/>
    </source>
</evidence>
<proteinExistence type="inferred from homology"/>
<dbReference type="EC" id="6.3.3.1" evidence="1"/>
<dbReference type="EMBL" id="CP001638">
    <property type="protein sequence ID" value="ACS23190.1"/>
    <property type="molecule type" value="Genomic_DNA"/>
</dbReference>
<dbReference type="SMR" id="C5D4I2"/>
<dbReference type="STRING" id="471223.GWCH70_0261"/>
<dbReference type="KEGG" id="gwc:GWCH70_0261"/>
<dbReference type="eggNOG" id="COG0150">
    <property type="taxonomic scope" value="Bacteria"/>
</dbReference>
<dbReference type="HOGENOM" id="CLU_047116_0_0_9"/>
<dbReference type="OrthoDB" id="9802507at2"/>
<dbReference type="UniPathway" id="UPA00074">
    <property type="reaction ID" value="UER00129"/>
</dbReference>
<dbReference type="GO" id="GO:0005829">
    <property type="term" value="C:cytosol"/>
    <property type="evidence" value="ECO:0007669"/>
    <property type="project" value="TreeGrafter"/>
</dbReference>
<dbReference type="GO" id="GO:0005524">
    <property type="term" value="F:ATP binding"/>
    <property type="evidence" value="ECO:0007669"/>
    <property type="project" value="UniProtKB-KW"/>
</dbReference>
<dbReference type="GO" id="GO:0004637">
    <property type="term" value="F:phosphoribosylamine-glycine ligase activity"/>
    <property type="evidence" value="ECO:0007669"/>
    <property type="project" value="TreeGrafter"/>
</dbReference>
<dbReference type="GO" id="GO:0004641">
    <property type="term" value="F:phosphoribosylformylglycinamidine cyclo-ligase activity"/>
    <property type="evidence" value="ECO:0007669"/>
    <property type="project" value="UniProtKB-UniRule"/>
</dbReference>
<dbReference type="GO" id="GO:0006189">
    <property type="term" value="P:'de novo' IMP biosynthetic process"/>
    <property type="evidence" value="ECO:0007669"/>
    <property type="project" value="UniProtKB-UniRule"/>
</dbReference>
<dbReference type="GO" id="GO:0046084">
    <property type="term" value="P:adenine biosynthetic process"/>
    <property type="evidence" value="ECO:0007669"/>
    <property type="project" value="TreeGrafter"/>
</dbReference>
<dbReference type="CDD" id="cd02196">
    <property type="entry name" value="PurM"/>
    <property type="match status" value="1"/>
</dbReference>
<dbReference type="FunFam" id="3.30.1330.10:FF:000001">
    <property type="entry name" value="Phosphoribosylformylglycinamidine cyclo-ligase"/>
    <property type="match status" value="1"/>
</dbReference>
<dbReference type="FunFam" id="3.90.650.10:FF:000001">
    <property type="entry name" value="Phosphoribosylformylglycinamidine cyclo-ligase"/>
    <property type="match status" value="1"/>
</dbReference>
<dbReference type="Gene3D" id="3.90.650.10">
    <property type="entry name" value="PurM-like C-terminal domain"/>
    <property type="match status" value="1"/>
</dbReference>
<dbReference type="Gene3D" id="3.30.1330.10">
    <property type="entry name" value="PurM-like, N-terminal domain"/>
    <property type="match status" value="1"/>
</dbReference>
<dbReference type="HAMAP" id="MF_00741">
    <property type="entry name" value="AIRS"/>
    <property type="match status" value="1"/>
</dbReference>
<dbReference type="InterPro" id="IPR010918">
    <property type="entry name" value="PurM-like_C_dom"/>
</dbReference>
<dbReference type="InterPro" id="IPR036676">
    <property type="entry name" value="PurM-like_C_sf"/>
</dbReference>
<dbReference type="InterPro" id="IPR016188">
    <property type="entry name" value="PurM-like_N"/>
</dbReference>
<dbReference type="InterPro" id="IPR036921">
    <property type="entry name" value="PurM-like_N_sf"/>
</dbReference>
<dbReference type="InterPro" id="IPR004733">
    <property type="entry name" value="PurM_cligase"/>
</dbReference>
<dbReference type="NCBIfam" id="TIGR00878">
    <property type="entry name" value="purM"/>
    <property type="match status" value="1"/>
</dbReference>
<dbReference type="PANTHER" id="PTHR10520:SF12">
    <property type="entry name" value="TRIFUNCTIONAL PURINE BIOSYNTHETIC PROTEIN ADENOSINE-3"/>
    <property type="match status" value="1"/>
</dbReference>
<dbReference type="PANTHER" id="PTHR10520">
    <property type="entry name" value="TRIFUNCTIONAL PURINE BIOSYNTHETIC PROTEIN ADENOSINE-3-RELATED"/>
    <property type="match status" value="1"/>
</dbReference>
<dbReference type="Pfam" id="PF00586">
    <property type="entry name" value="AIRS"/>
    <property type="match status" value="1"/>
</dbReference>
<dbReference type="Pfam" id="PF02769">
    <property type="entry name" value="AIRS_C"/>
    <property type="match status" value="1"/>
</dbReference>
<dbReference type="SUPFAM" id="SSF56042">
    <property type="entry name" value="PurM C-terminal domain-like"/>
    <property type="match status" value="1"/>
</dbReference>
<dbReference type="SUPFAM" id="SSF55326">
    <property type="entry name" value="PurM N-terminal domain-like"/>
    <property type="match status" value="1"/>
</dbReference>
<organism>
    <name type="scientific">Geobacillus sp. (strain WCH70)</name>
    <dbReference type="NCBI Taxonomy" id="471223"/>
    <lineage>
        <taxon>Bacteria</taxon>
        <taxon>Bacillati</taxon>
        <taxon>Bacillota</taxon>
        <taxon>Bacilli</taxon>
        <taxon>Bacillales</taxon>
        <taxon>Anoxybacillaceae</taxon>
        <taxon>Geobacillus</taxon>
    </lineage>
</organism>
<feature type="chain" id="PRO_1000212824" description="Phosphoribosylformylglycinamidine cyclo-ligase">
    <location>
        <begin position="1"/>
        <end position="346"/>
    </location>
</feature>
<name>PUR5_GEOSW</name>
<keyword id="KW-0067">ATP-binding</keyword>
<keyword id="KW-0963">Cytoplasm</keyword>
<keyword id="KW-0436">Ligase</keyword>
<keyword id="KW-0547">Nucleotide-binding</keyword>
<keyword id="KW-0658">Purine biosynthesis</keyword>
<reference key="1">
    <citation type="submission" date="2009-06" db="EMBL/GenBank/DDBJ databases">
        <title>Complete sequence of chromosome of Geopacillus sp. WCH70.</title>
        <authorList>
            <consortium name="US DOE Joint Genome Institute"/>
            <person name="Lucas S."/>
            <person name="Copeland A."/>
            <person name="Lapidus A."/>
            <person name="Glavina del Rio T."/>
            <person name="Dalin E."/>
            <person name="Tice H."/>
            <person name="Bruce D."/>
            <person name="Goodwin L."/>
            <person name="Pitluck S."/>
            <person name="Chertkov O."/>
            <person name="Brettin T."/>
            <person name="Detter J.C."/>
            <person name="Han C."/>
            <person name="Larimer F."/>
            <person name="Land M."/>
            <person name="Hauser L."/>
            <person name="Kyrpides N."/>
            <person name="Mikhailova N."/>
            <person name="Brumm P."/>
            <person name="Mead D.A."/>
            <person name="Richardson P."/>
        </authorList>
    </citation>
    <scope>NUCLEOTIDE SEQUENCE [LARGE SCALE GENOMIC DNA]</scope>
    <source>
        <strain>WCH70</strain>
    </source>
</reference>
<comment type="catalytic activity">
    <reaction evidence="1">
        <text>2-formamido-N(1)-(5-O-phospho-beta-D-ribosyl)acetamidine + ATP = 5-amino-1-(5-phospho-beta-D-ribosyl)imidazole + ADP + phosphate + H(+)</text>
        <dbReference type="Rhea" id="RHEA:23032"/>
        <dbReference type="ChEBI" id="CHEBI:15378"/>
        <dbReference type="ChEBI" id="CHEBI:30616"/>
        <dbReference type="ChEBI" id="CHEBI:43474"/>
        <dbReference type="ChEBI" id="CHEBI:137981"/>
        <dbReference type="ChEBI" id="CHEBI:147287"/>
        <dbReference type="ChEBI" id="CHEBI:456216"/>
        <dbReference type="EC" id="6.3.3.1"/>
    </reaction>
</comment>
<comment type="pathway">
    <text evidence="1">Purine metabolism; IMP biosynthesis via de novo pathway; 5-amino-1-(5-phospho-D-ribosyl)imidazole from N(2)-formyl-N(1)-(5-phospho-D-ribosyl)glycinamide: step 2/2.</text>
</comment>
<comment type="subcellular location">
    <subcellularLocation>
        <location evidence="1">Cytoplasm</location>
    </subcellularLocation>
</comment>
<comment type="similarity">
    <text evidence="1">Belongs to the AIR synthase family.</text>
</comment>
<accession>C5D4I2</accession>
<gene>
    <name evidence="1" type="primary">purM</name>
    <name type="ordered locus">GWCH70_0261</name>
</gene>
<sequence>MAEAYKQAGVDIEAGYKAVSLMKQHVQKTMRPEVLSGLGGFGGMFDLSSLGYREPVLISGTDGVGTKLKIAFMMDCHDTIGIDCVAMCVNDIVVQGAEPLFFLDYIACGKAIPEKIAQIVKGIADGCVEAGCALIGGETAEMPGMYDENEYDVAGFAVGIAEKSKLVTGSAIQAGDALIGLASNGIHSNGYSLVRRIVFEQAKLALDRVYEPLSVPLGEELLKPTRIYVKPLLNVMKQFEIKGMAHITGGGFIENIPRMLPKGLGAEIDYGSWPIPPVFDLLQEKGNLLRHDMFSIFNMGIGMVLAVDSEMIHPVIARLEELGEKAYLIGRVKQGEGVSFAGGAMS</sequence>